<reference key="1">
    <citation type="journal article" date="2010" name="Genome Biol. Evol.">
        <title>Continuing evolution of Burkholderia mallei through genome reduction and large-scale rearrangements.</title>
        <authorList>
            <person name="Losada L."/>
            <person name="Ronning C.M."/>
            <person name="DeShazer D."/>
            <person name="Woods D."/>
            <person name="Fedorova N."/>
            <person name="Kim H.S."/>
            <person name="Shabalina S.A."/>
            <person name="Pearson T.R."/>
            <person name="Brinkac L."/>
            <person name="Tan P."/>
            <person name="Nandi T."/>
            <person name="Crabtree J."/>
            <person name="Badger J."/>
            <person name="Beckstrom-Sternberg S."/>
            <person name="Saqib M."/>
            <person name="Schutzer S.E."/>
            <person name="Keim P."/>
            <person name="Nierman W.C."/>
        </authorList>
    </citation>
    <scope>NUCLEOTIDE SEQUENCE [LARGE SCALE GENOMIC DNA]</scope>
    <source>
        <strain>NCTC 10229</strain>
    </source>
</reference>
<organism>
    <name type="scientific">Burkholderia mallei (strain NCTC 10229)</name>
    <dbReference type="NCBI Taxonomy" id="412022"/>
    <lineage>
        <taxon>Bacteria</taxon>
        <taxon>Pseudomonadati</taxon>
        <taxon>Pseudomonadota</taxon>
        <taxon>Betaproteobacteria</taxon>
        <taxon>Burkholderiales</taxon>
        <taxon>Burkholderiaceae</taxon>
        <taxon>Burkholderia</taxon>
        <taxon>pseudomallei group</taxon>
    </lineage>
</organism>
<gene>
    <name evidence="1" type="primary">eno</name>
    <name type="ordered locus">BMA10229_A3125</name>
</gene>
<sequence length="427" mass="45683">MSAIVDIIGREILDSRGNPTVECDVLLESGTMGRAAVPSGASTGSREAIELRDGEAGRYGGKGVLKAVEHINTEISEAIMGLDASEQAFLDKTLLELDGTDNKSRLGANAMLAVSMAVAKAAAEEAGLPLYRYFGGSGAMQLPVPMMNIVNGGAHANNSLDIQEFMIVPVSQPTFREALRCGAEVFHALKKILGDRGMSTAVGDEGGFAPNFGSNDECLSTILQAIEKAGYRAGEDVLLALDCAASEFYHDGKYQLAGEGLQLSSAEFTDYLATLADKFPIVSIEDGMHEGDWDGWKLLTERLGKKVQLVGDDLFVTNTRILKEGIEKGIANSILIKINQIGTLTETFAAIEMAKRARYTAVISHRSGETEDSTIADIAVGLNAGQIKTGSLSRSDRISKYNQLLRIEEDLGDIASYPGKSAFYNLR</sequence>
<proteinExistence type="inferred from homology"/>
<feature type="chain" id="PRO_1000019192" description="Enolase">
    <location>
        <begin position="1"/>
        <end position="427"/>
    </location>
</feature>
<feature type="active site" description="Proton donor" evidence="1">
    <location>
        <position position="205"/>
    </location>
</feature>
<feature type="active site" description="Proton acceptor" evidence="1">
    <location>
        <position position="337"/>
    </location>
</feature>
<feature type="binding site" evidence="1">
    <location>
        <position position="163"/>
    </location>
    <ligand>
        <name>(2R)-2-phosphoglycerate</name>
        <dbReference type="ChEBI" id="CHEBI:58289"/>
    </ligand>
</feature>
<feature type="binding site" evidence="1">
    <location>
        <position position="242"/>
    </location>
    <ligand>
        <name>Mg(2+)</name>
        <dbReference type="ChEBI" id="CHEBI:18420"/>
    </ligand>
</feature>
<feature type="binding site" evidence="1">
    <location>
        <position position="285"/>
    </location>
    <ligand>
        <name>Mg(2+)</name>
        <dbReference type="ChEBI" id="CHEBI:18420"/>
    </ligand>
</feature>
<feature type="binding site" evidence="1">
    <location>
        <position position="312"/>
    </location>
    <ligand>
        <name>Mg(2+)</name>
        <dbReference type="ChEBI" id="CHEBI:18420"/>
    </ligand>
</feature>
<feature type="binding site" evidence="1">
    <location>
        <position position="337"/>
    </location>
    <ligand>
        <name>(2R)-2-phosphoglycerate</name>
        <dbReference type="ChEBI" id="CHEBI:58289"/>
    </ligand>
</feature>
<feature type="binding site" evidence="1">
    <location>
        <position position="366"/>
    </location>
    <ligand>
        <name>(2R)-2-phosphoglycerate</name>
        <dbReference type="ChEBI" id="CHEBI:58289"/>
    </ligand>
</feature>
<feature type="binding site" evidence="1">
    <location>
        <position position="367"/>
    </location>
    <ligand>
        <name>(2R)-2-phosphoglycerate</name>
        <dbReference type="ChEBI" id="CHEBI:58289"/>
    </ligand>
</feature>
<feature type="binding site" evidence="1">
    <location>
        <position position="388"/>
    </location>
    <ligand>
        <name>(2R)-2-phosphoglycerate</name>
        <dbReference type="ChEBI" id="CHEBI:58289"/>
    </ligand>
</feature>
<evidence type="ECO:0000255" key="1">
    <source>
        <dbReference type="HAMAP-Rule" id="MF_00318"/>
    </source>
</evidence>
<comment type="function">
    <text evidence="1">Catalyzes the reversible conversion of 2-phosphoglycerate (2-PG) into phosphoenolpyruvate (PEP). It is essential for the degradation of carbohydrates via glycolysis.</text>
</comment>
<comment type="catalytic activity">
    <reaction evidence="1">
        <text>(2R)-2-phosphoglycerate = phosphoenolpyruvate + H2O</text>
        <dbReference type="Rhea" id="RHEA:10164"/>
        <dbReference type="ChEBI" id="CHEBI:15377"/>
        <dbReference type="ChEBI" id="CHEBI:58289"/>
        <dbReference type="ChEBI" id="CHEBI:58702"/>
        <dbReference type="EC" id="4.2.1.11"/>
    </reaction>
</comment>
<comment type="cofactor">
    <cofactor evidence="1">
        <name>Mg(2+)</name>
        <dbReference type="ChEBI" id="CHEBI:18420"/>
    </cofactor>
    <text evidence="1">Binds a second Mg(2+) ion via substrate during catalysis.</text>
</comment>
<comment type="pathway">
    <text evidence="1">Carbohydrate degradation; glycolysis; pyruvate from D-glyceraldehyde 3-phosphate: step 4/5.</text>
</comment>
<comment type="subcellular location">
    <subcellularLocation>
        <location evidence="1">Cytoplasm</location>
    </subcellularLocation>
    <subcellularLocation>
        <location evidence="1">Secreted</location>
    </subcellularLocation>
    <subcellularLocation>
        <location evidence="1">Cell surface</location>
    </subcellularLocation>
    <text evidence="1">Fractions of enolase are present in both the cytoplasm and on the cell surface.</text>
</comment>
<comment type="similarity">
    <text evidence="1">Belongs to the enolase family.</text>
</comment>
<keyword id="KW-0963">Cytoplasm</keyword>
<keyword id="KW-0324">Glycolysis</keyword>
<keyword id="KW-0456">Lyase</keyword>
<keyword id="KW-0460">Magnesium</keyword>
<keyword id="KW-0479">Metal-binding</keyword>
<keyword id="KW-0964">Secreted</keyword>
<dbReference type="EC" id="4.2.1.11" evidence="1"/>
<dbReference type="EMBL" id="CP000546">
    <property type="protein sequence ID" value="ABN00865.1"/>
    <property type="molecule type" value="Genomic_DNA"/>
</dbReference>
<dbReference type="RefSeq" id="WP_004192585.1">
    <property type="nucleotide sequence ID" value="NC_008836.1"/>
</dbReference>
<dbReference type="SMR" id="A2SAU7"/>
<dbReference type="GeneID" id="93060827"/>
<dbReference type="KEGG" id="bml:BMA10229_A3125"/>
<dbReference type="HOGENOM" id="CLU_031223_2_1_4"/>
<dbReference type="UniPathway" id="UPA00109">
    <property type="reaction ID" value="UER00187"/>
</dbReference>
<dbReference type="Proteomes" id="UP000002283">
    <property type="component" value="Chromosome I"/>
</dbReference>
<dbReference type="GO" id="GO:0009986">
    <property type="term" value="C:cell surface"/>
    <property type="evidence" value="ECO:0007669"/>
    <property type="project" value="UniProtKB-SubCell"/>
</dbReference>
<dbReference type="GO" id="GO:0005576">
    <property type="term" value="C:extracellular region"/>
    <property type="evidence" value="ECO:0007669"/>
    <property type="project" value="UniProtKB-SubCell"/>
</dbReference>
<dbReference type="GO" id="GO:0000015">
    <property type="term" value="C:phosphopyruvate hydratase complex"/>
    <property type="evidence" value="ECO:0007669"/>
    <property type="project" value="InterPro"/>
</dbReference>
<dbReference type="GO" id="GO:0000287">
    <property type="term" value="F:magnesium ion binding"/>
    <property type="evidence" value="ECO:0007669"/>
    <property type="project" value="UniProtKB-UniRule"/>
</dbReference>
<dbReference type="GO" id="GO:0004634">
    <property type="term" value="F:phosphopyruvate hydratase activity"/>
    <property type="evidence" value="ECO:0007669"/>
    <property type="project" value="UniProtKB-UniRule"/>
</dbReference>
<dbReference type="GO" id="GO:0006096">
    <property type="term" value="P:glycolytic process"/>
    <property type="evidence" value="ECO:0007669"/>
    <property type="project" value="UniProtKB-UniRule"/>
</dbReference>
<dbReference type="CDD" id="cd03313">
    <property type="entry name" value="enolase"/>
    <property type="match status" value="1"/>
</dbReference>
<dbReference type="FunFam" id="3.20.20.120:FF:000001">
    <property type="entry name" value="Enolase"/>
    <property type="match status" value="1"/>
</dbReference>
<dbReference type="FunFam" id="3.30.390.10:FF:000001">
    <property type="entry name" value="Enolase"/>
    <property type="match status" value="1"/>
</dbReference>
<dbReference type="Gene3D" id="3.20.20.120">
    <property type="entry name" value="Enolase-like C-terminal domain"/>
    <property type="match status" value="1"/>
</dbReference>
<dbReference type="Gene3D" id="3.30.390.10">
    <property type="entry name" value="Enolase-like, N-terminal domain"/>
    <property type="match status" value="1"/>
</dbReference>
<dbReference type="HAMAP" id="MF_00318">
    <property type="entry name" value="Enolase"/>
    <property type="match status" value="1"/>
</dbReference>
<dbReference type="InterPro" id="IPR000941">
    <property type="entry name" value="Enolase"/>
</dbReference>
<dbReference type="InterPro" id="IPR036849">
    <property type="entry name" value="Enolase-like_C_sf"/>
</dbReference>
<dbReference type="InterPro" id="IPR029017">
    <property type="entry name" value="Enolase-like_N"/>
</dbReference>
<dbReference type="InterPro" id="IPR020810">
    <property type="entry name" value="Enolase_C"/>
</dbReference>
<dbReference type="InterPro" id="IPR020809">
    <property type="entry name" value="Enolase_CS"/>
</dbReference>
<dbReference type="InterPro" id="IPR020811">
    <property type="entry name" value="Enolase_N"/>
</dbReference>
<dbReference type="NCBIfam" id="TIGR01060">
    <property type="entry name" value="eno"/>
    <property type="match status" value="1"/>
</dbReference>
<dbReference type="PANTHER" id="PTHR11902">
    <property type="entry name" value="ENOLASE"/>
    <property type="match status" value="1"/>
</dbReference>
<dbReference type="PANTHER" id="PTHR11902:SF1">
    <property type="entry name" value="ENOLASE"/>
    <property type="match status" value="1"/>
</dbReference>
<dbReference type="Pfam" id="PF00113">
    <property type="entry name" value="Enolase_C"/>
    <property type="match status" value="1"/>
</dbReference>
<dbReference type="Pfam" id="PF03952">
    <property type="entry name" value="Enolase_N"/>
    <property type="match status" value="1"/>
</dbReference>
<dbReference type="PIRSF" id="PIRSF001400">
    <property type="entry name" value="Enolase"/>
    <property type="match status" value="1"/>
</dbReference>
<dbReference type="PRINTS" id="PR00148">
    <property type="entry name" value="ENOLASE"/>
</dbReference>
<dbReference type="SFLD" id="SFLDF00002">
    <property type="entry name" value="enolase"/>
    <property type="match status" value="1"/>
</dbReference>
<dbReference type="SFLD" id="SFLDG00178">
    <property type="entry name" value="enolase"/>
    <property type="match status" value="1"/>
</dbReference>
<dbReference type="SMART" id="SM01192">
    <property type="entry name" value="Enolase_C"/>
    <property type="match status" value="1"/>
</dbReference>
<dbReference type="SMART" id="SM01193">
    <property type="entry name" value="Enolase_N"/>
    <property type="match status" value="1"/>
</dbReference>
<dbReference type="SUPFAM" id="SSF51604">
    <property type="entry name" value="Enolase C-terminal domain-like"/>
    <property type="match status" value="1"/>
</dbReference>
<dbReference type="SUPFAM" id="SSF54826">
    <property type="entry name" value="Enolase N-terminal domain-like"/>
    <property type="match status" value="1"/>
</dbReference>
<dbReference type="PROSITE" id="PS00164">
    <property type="entry name" value="ENOLASE"/>
    <property type="match status" value="1"/>
</dbReference>
<accession>A2SAU7</accession>
<name>ENO_BURM9</name>
<protein>
    <recommendedName>
        <fullName evidence="1">Enolase</fullName>
        <ecNumber evidence="1">4.2.1.11</ecNumber>
    </recommendedName>
    <alternativeName>
        <fullName evidence="1">2-phospho-D-glycerate hydro-lyase</fullName>
    </alternativeName>
    <alternativeName>
        <fullName evidence="1">2-phosphoglycerate dehydratase</fullName>
    </alternativeName>
</protein>